<organism evidence="13">
    <name type="scientific">Plasmodium falciparum (isolate 3D7)</name>
    <dbReference type="NCBI Taxonomy" id="36329"/>
    <lineage>
        <taxon>Eukaryota</taxon>
        <taxon>Sar</taxon>
        <taxon>Alveolata</taxon>
        <taxon>Apicomplexa</taxon>
        <taxon>Aconoidasida</taxon>
        <taxon>Haemosporida</taxon>
        <taxon>Plasmodiidae</taxon>
        <taxon>Plasmodium</taxon>
        <taxon>Plasmodium (Laverania)</taxon>
    </lineage>
</organism>
<name>FCLN_PLAF7</name>
<gene>
    <name evidence="9" type="primary">FLN</name>
    <name evidence="12" type="ORF">PF3D7_1360800</name>
</gene>
<accession>Q76NL8</accession>
<accession>Q9U7N7</accession>
<comment type="function">
    <text evidence="1 5">In the food vacuole, acts downstream of proteases plasmepsins PMI and PMII and falcipains during the catabolism of host hemoglobin by cleaving peptide fragments of alpha and beta hemoglobin subunits generated by PMI and PMII and falcipains (PubMed:17074076). In the apicoplast, degrades apicoplast transit peptides after their cleavage (PubMed:17074076). Prefers bulky hydrophobic amino acids in the P1' position at both acidic and neutral pH (By similarity). At P2', prefers hydrophobic residues at acidic pH; at neutral pH, these same residues are abundant but prefers Arg (By similarity). At P3', prefers hydrophobic residues, especially Met, at both pH conditions. At P4' and P5', prefers acidic residues at acidic pH, however, at neutral pH, the enzyme is less selective at these positions (By similarity). The optimal site cleavage at acidic pH is YNEHS-|-FFMEE and, at neutral pH, MKRHS-|-FRMRG (By similarity).</text>
</comment>
<comment type="cofactor">
    <cofactor evidence="1">
        <name>Zn(2+)</name>
        <dbReference type="ChEBI" id="CHEBI:29105"/>
    </cofactor>
    <text evidence="7">Binds 1 zinc ion per subunit.</text>
</comment>
<comment type="subunit">
    <text evidence="1 6">Monomer (By similarity). Component of the hemozoin formation complex (HFC) composed of falcipains FP2A and/or FP2B, plasmepsins PMII, PMIII/HAP and PMIV, heme detoxifying protein HDP and falcilysin FLN (PubMed:23471987). The HFC complex is involved in hemoglobin degradation and detoxification of heme in the food vacuole during the asexual blood stage (PubMed:23471987).</text>
</comment>
<comment type="subcellular location">
    <subcellularLocation>
        <location evidence="5 6">Vacuole membrane</location>
        <topology evidence="1">Peripheral membrane protein</topology>
    </subcellularLocation>
    <subcellularLocation>
        <location evidence="5">Plastid</location>
        <location evidence="5">Apicoplast</location>
    </subcellularLocation>
    <subcellularLocation>
        <location evidence="1">Vesicle</location>
    </subcellularLocation>
    <text evidence="5 6">Localizes to the food (or digestive) vacuole, an acidic vacuole where host hemoglobin is digested (PubMed:17074076, PubMed:23471987). During the trophozoite and early to mid-schizont stages, localizes to the apicoplast (PubMed:17074076).</text>
</comment>
<comment type="developmental stage">
    <text evidence="5 6">Expressed during the asexual blood stage; expression begins at the late ring, early trophozoite stage, increases in the mid-trophozoite stage, and persists throughout the schizont stage (at protein level).</text>
</comment>
<comment type="PTM">
    <text evidence="1">Does not require processing for targeting to the food vacuole or maturation.</text>
</comment>
<comment type="similarity">
    <text evidence="10">Belongs to the peptidase M16 family.</text>
</comment>
<sequence>MNLTKLMKVIGYINIITNCVQSFTNRADKKRYNVFAKSFINTINTNLYTFKAVMSKTPEWIHEKSPKHNSYDIIEKRYNEEFKMTYTVYQHKKAKTQVISLGTNDPLDVEQAFAFYVKTLTHSGKGIPHILEHSVLSGSKNYNYKNSIGLLEKGTLHTHLNAYTFNDRTVYMAGSMNNKDFFNIMGVYMDSVFQPNVLENKYIFETEGWTYEVEKLKEDEKGKAEIPQMKDYKVSFNGIVYNEMKGALSSPLEDLYHEEMKYMFPDNVHSNNSGGDPKEITNLTYEEFKEFYYKNYNPKKVKVFFFSKNNPTELLNFVDQYLGQLDYSKYRDDAVESVEYQTYKKGPFYIKKKYGDHSEEKENLVSVAWLLNPKVDKTNNHNNNHSNNQSSENNGYSNGSHSSDLSLENPTDYFVLLIINNLLIHTPESVLYKALTDCGLGNNVIDRGLNDSLVQYIFSIGLKGIKRNNEKIKNFDKVHYEVEDVIMNALKKVVKEGFNKSAVEASINNIEFILKEANLKTSKSIDFVFEMTSKLNYNRDPLLIFEFEKYLNIVKNKIKNEPMYLEKFVEKHFINNAHRSVILLEGDENYAQEQENLEKQELKKRIENFNEQEKEQVIKNFEELSKYKNAEESPEHLNKFPIISISDLNKKTLEVPVNVYFTNINENNNIMETYNKLKTNEHMLKDNMDVFLKKYVLKNDKHNTNNNNNNNNNMDYSFTETKYEGNVPILVYEMPTTGIVYLQFVFSLDHLTVDELAYLNLFKTLILENKTNKRSSEDFVILREKNIGSMSANVALYSKDDHLNVTDKYNAQALFNLEMHVLSHKCNDALNIALEAVKESDFSNKKKVIDILKRKINGMKTTFSEKGYAILMKYVKAHLNSKHYAHNIIYGYENYLKLQEQLELAENDFKTLENILVRIRNKIFNKKNLMVSVTSDYGALKHLFVNSNESLKNLVSYFEENDKYINDMQNKVNDPTVMGWNEEIKSKKLFDEEKVKKEFFVLPTFVNSVSMSGILFKPGEYLDPSFTVIVAALKNSYLWDTVRGLNGAYGVFADIEYDGSVVFLSARDPNLEKTLATFRESAKGLRKMADTMTENDLLRYIINTIGTIDKPRRGIELSKLSFLRLISNESEQDRVEFRKRIMNTKKEDFYKFADLLESKVNEFEKNIVIITTKEKANEYIANVDGEFKKVLIE</sequence>
<keyword id="KW-0002">3D-structure</keyword>
<keyword id="KW-0933">Apicoplast</keyword>
<keyword id="KW-0175">Coiled coil</keyword>
<keyword id="KW-0378">Hydrolase</keyword>
<keyword id="KW-0472">Membrane</keyword>
<keyword id="KW-0479">Metal-binding</keyword>
<keyword id="KW-0482">Metalloprotease</keyword>
<keyword id="KW-0934">Plastid</keyword>
<keyword id="KW-0645">Protease</keyword>
<keyword id="KW-1185">Reference proteome</keyword>
<keyword id="KW-0926">Vacuole</keyword>
<keyword id="KW-0862">Zinc</keyword>
<protein>
    <recommendedName>
        <fullName evidence="8">Falcilysin</fullName>
        <ecNumber evidence="5">3.4.24.-</ecNumber>
    </recommendedName>
</protein>
<dbReference type="EC" id="3.4.24.-" evidence="5"/>
<dbReference type="EMBL" id="AF123458">
    <property type="protein sequence ID" value="AAF06062.1"/>
    <property type="molecule type" value="Genomic_DNA"/>
</dbReference>
<dbReference type="EMBL" id="AL844509">
    <property type="protein sequence ID" value="CAD52728.1"/>
    <property type="molecule type" value="Genomic_DNA"/>
</dbReference>
<dbReference type="RefSeq" id="XP_001350319.1">
    <property type="nucleotide sequence ID" value="XM_001350283.1"/>
</dbReference>
<dbReference type="PDB" id="3S5H">
    <property type="method" value="X-ray"/>
    <property type="resolution" value="1.60 A"/>
    <property type="chains" value="A=1-1193"/>
</dbReference>
<dbReference type="PDB" id="3S5I">
    <property type="method" value="X-ray"/>
    <property type="resolution" value="1.74 A"/>
    <property type="chains" value="A=1-1193"/>
</dbReference>
<dbReference type="PDB" id="3S5K">
    <property type="method" value="X-ray"/>
    <property type="resolution" value="3.20 A"/>
    <property type="chains" value="A=1-1193"/>
</dbReference>
<dbReference type="PDB" id="3S5M">
    <property type="method" value="X-ray"/>
    <property type="resolution" value="1.55 A"/>
    <property type="chains" value="A=1-1193"/>
</dbReference>
<dbReference type="PDB" id="7DI7">
    <property type="method" value="X-ray"/>
    <property type="resolution" value="1.82 A"/>
    <property type="chains" value="A=59-1193"/>
</dbReference>
<dbReference type="PDB" id="7DIA">
    <property type="method" value="X-ray"/>
    <property type="resolution" value="1.55 A"/>
    <property type="chains" value="A=59-1193"/>
</dbReference>
<dbReference type="PDB" id="7DIJ">
    <property type="method" value="X-ray"/>
    <property type="resolution" value="1.90 A"/>
    <property type="chains" value="A=59-1193"/>
</dbReference>
<dbReference type="PDB" id="7VPE">
    <property type="method" value="X-ray"/>
    <property type="resolution" value="1.62 A"/>
    <property type="chains" value="A=59-1193"/>
</dbReference>
<dbReference type="PDB" id="8HO4">
    <property type="method" value="X-ray"/>
    <property type="resolution" value="1.96 A"/>
    <property type="chains" value="A=59-1193"/>
</dbReference>
<dbReference type="PDB" id="8HO5">
    <property type="method" value="X-ray"/>
    <property type="resolution" value="2.00 A"/>
    <property type="chains" value="A=59-1193"/>
</dbReference>
<dbReference type="PDB" id="8WXW">
    <property type="method" value="X-ray"/>
    <property type="resolution" value="1.86 A"/>
    <property type="chains" value="A=59-1193"/>
</dbReference>
<dbReference type="PDB" id="8WXZ">
    <property type="method" value="X-ray"/>
    <property type="resolution" value="2.30 A"/>
    <property type="chains" value="A=59-1193"/>
</dbReference>
<dbReference type="PDB" id="8WYT">
    <property type="method" value="EM"/>
    <property type="resolution" value="2.70 A"/>
    <property type="chains" value="A=59-1193"/>
</dbReference>
<dbReference type="PDB" id="8WYU">
    <property type="method" value="EM"/>
    <property type="resolution" value="3.20 A"/>
    <property type="chains" value="A=61-1193"/>
</dbReference>
<dbReference type="PDB" id="8WYX">
    <property type="method" value="EM"/>
    <property type="resolution" value="3.50 A"/>
    <property type="chains" value="A=59-1192"/>
</dbReference>
<dbReference type="PDB" id="8WYY">
    <property type="method" value="EM"/>
    <property type="resolution" value="3.10 A"/>
    <property type="chains" value="A=61-1193"/>
</dbReference>
<dbReference type="PDBsum" id="3S5H"/>
<dbReference type="PDBsum" id="3S5I"/>
<dbReference type="PDBsum" id="3S5K"/>
<dbReference type="PDBsum" id="3S5M"/>
<dbReference type="PDBsum" id="7DI7"/>
<dbReference type="PDBsum" id="7DIA"/>
<dbReference type="PDBsum" id="7DIJ"/>
<dbReference type="PDBsum" id="7VPE"/>
<dbReference type="PDBsum" id="8HO4"/>
<dbReference type="PDBsum" id="8HO5"/>
<dbReference type="PDBsum" id="8WXW"/>
<dbReference type="PDBsum" id="8WXZ"/>
<dbReference type="PDBsum" id="8WYT"/>
<dbReference type="PDBsum" id="8WYU"/>
<dbReference type="PDBsum" id="8WYX"/>
<dbReference type="PDBsum" id="8WYY"/>
<dbReference type="EMDB" id="EMD-37938"/>
<dbReference type="EMDB" id="EMD-37939"/>
<dbReference type="EMDB" id="EMD-37940"/>
<dbReference type="EMDB" id="EMD-37941"/>
<dbReference type="SMR" id="Q76NL8"/>
<dbReference type="FunCoup" id="Q76NL8">
    <property type="interactions" value="304"/>
</dbReference>
<dbReference type="IntAct" id="Q76NL8">
    <property type="interactions" value="4"/>
</dbReference>
<dbReference type="STRING" id="36329.Q76NL8"/>
<dbReference type="BindingDB" id="Q76NL8"/>
<dbReference type="ChEMBL" id="CHEMBL4295876"/>
<dbReference type="MEROPS" id="M16.011"/>
<dbReference type="SwissPalm" id="Q76NL8"/>
<dbReference type="PaxDb" id="5833-PF13_0322"/>
<dbReference type="EnsemblProtists" id="CAD52728">
    <property type="protein sequence ID" value="CAD52728"/>
    <property type="gene ID" value="PF3D7_1360800"/>
</dbReference>
<dbReference type="GeneID" id="814283"/>
<dbReference type="KEGG" id="pfa:PF3D7_1360800"/>
<dbReference type="VEuPathDB" id="PlasmoDB:PF3D7_1360800"/>
<dbReference type="VEuPathDB" id="PlasmoDB:Pf7G8-2_000463200"/>
<dbReference type="VEuPathDB" id="PlasmoDB:Pf7G8_130065300"/>
<dbReference type="VEuPathDB" id="PlasmoDB:PfCD01_130066400"/>
<dbReference type="VEuPathDB" id="PlasmoDB:PfDd2_130066600"/>
<dbReference type="VEuPathDB" id="PlasmoDB:PfGA01_130066900"/>
<dbReference type="VEuPathDB" id="PlasmoDB:PfGB4_130066700"/>
<dbReference type="VEuPathDB" id="PlasmoDB:PfGN01_130067500"/>
<dbReference type="VEuPathDB" id="PlasmoDB:PfHB3_130067200"/>
<dbReference type="VEuPathDB" id="PlasmoDB:PfIT_130066100"/>
<dbReference type="VEuPathDB" id="PlasmoDB:PfKE01_130066400"/>
<dbReference type="VEuPathDB" id="PlasmoDB:PfKH01_130064800"/>
<dbReference type="VEuPathDB" id="PlasmoDB:PfKH02_130063700"/>
<dbReference type="VEuPathDB" id="PlasmoDB:PfML01_130064900"/>
<dbReference type="VEuPathDB" id="PlasmoDB:PfNF135_130065000"/>
<dbReference type="VEuPathDB" id="PlasmoDB:PfNF166_130065700"/>
<dbReference type="VEuPathDB" id="PlasmoDB:PfNF54_130065400"/>
<dbReference type="VEuPathDB" id="PlasmoDB:PfSD01_130067500"/>
<dbReference type="VEuPathDB" id="PlasmoDB:PfSN01_130063800"/>
<dbReference type="VEuPathDB" id="PlasmoDB:PfTG01_130066500"/>
<dbReference type="HOGENOM" id="CLU_009165_1_0_1"/>
<dbReference type="InParanoid" id="Q76NL8"/>
<dbReference type="OMA" id="NYLYYIR"/>
<dbReference type="OrthoDB" id="10250783at2759"/>
<dbReference type="PhylomeDB" id="Q76NL8"/>
<dbReference type="EvolutionaryTrace" id="Q76NL8"/>
<dbReference type="Proteomes" id="UP000001450">
    <property type="component" value="Chromosome 13"/>
</dbReference>
<dbReference type="GO" id="GO:0020011">
    <property type="term" value="C:apicoplast"/>
    <property type="evidence" value="ECO:0000314"/>
    <property type="project" value="GeneDB"/>
</dbReference>
<dbReference type="GO" id="GO:0020020">
    <property type="term" value="C:food vacuole"/>
    <property type="evidence" value="ECO:0000314"/>
    <property type="project" value="UniProtKB"/>
</dbReference>
<dbReference type="GO" id="GO:0005774">
    <property type="term" value="C:vacuolar membrane"/>
    <property type="evidence" value="ECO:0007669"/>
    <property type="project" value="UniProtKB-SubCell"/>
</dbReference>
<dbReference type="GO" id="GO:0046872">
    <property type="term" value="F:metal ion binding"/>
    <property type="evidence" value="ECO:0007669"/>
    <property type="project" value="UniProtKB-KW"/>
</dbReference>
<dbReference type="GO" id="GO:0004222">
    <property type="term" value="F:metalloendopeptidase activity"/>
    <property type="evidence" value="ECO:0000314"/>
    <property type="project" value="UniProtKB"/>
</dbReference>
<dbReference type="GO" id="GO:0042540">
    <property type="term" value="P:hemoglobin catabolic process"/>
    <property type="evidence" value="ECO:0000314"/>
    <property type="project" value="GeneDB"/>
</dbReference>
<dbReference type="GO" id="GO:0016485">
    <property type="term" value="P:protein processing"/>
    <property type="evidence" value="ECO:0000318"/>
    <property type="project" value="GO_Central"/>
</dbReference>
<dbReference type="FunFam" id="3.30.830.10:FF:000053">
    <property type="entry name" value="Falcilysin"/>
    <property type="match status" value="1"/>
</dbReference>
<dbReference type="FunFam" id="3.30.830.10:FF:000054">
    <property type="entry name" value="Falcilysin"/>
    <property type="match status" value="1"/>
</dbReference>
<dbReference type="FunFam" id="3.30.830.10:FF:000056">
    <property type="entry name" value="Falcilysin"/>
    <property type="match status" value="1"/>
</dbReference>
<dbReference type="Gene3D" id="3.30.830.10">
    <property type="entry name" value="Metalloenzyme, LuxS/M16 peptidase-like"/>
    <property type="match status" value="4"/>
</dbReference>
<dbReference type="InterPro" id="IPR011249">
    <property type="entry name" value="Metalloenz_LuxS/M16"/>
</dbReference>
<dbReference type="InterPro" id="IPR011765">
    <property type="entry name" value="Pept_M16_N"/>
</dbReference>
<dbReference type="InterPro" id="IPR007863">
    <property type="entry name" value="Peptidase_M16_C"/>
</dbReference>
<dbReference type="InterPro" id="IPR013578">
    <property type="entry name" value="Peptidase_M16C_assoc"/>
</dbReference>
<dbReference type="InterPro" id="IPR055130">
    <property type="entry name" value="PreP_C"/>
</dbReference>
<dbReference type="PANTHER" id="PTHR43016">
    <property type="entry name" value="PRESEQUENCE PROTEASE"/>
    <property type="match status" value="1"/>
</dbReference>
<dbReference type="PANTHER" id="PTHR43016:SF13">
    <property type="entry name" value="PRESEQUENCE PROTEASE, MITOCHONDRIAL"/>
    <property type="match status" value="1"/>
</dbReference>
<dbReference type="Pfam" id="PF08367">
    <property type="entry name" value="M16C_assoc"/>
    <property type="match status" value="2"/>
</dbReference>
<dbReference type="Pfam" id="PF00675">
    <property type="entry name" value="Peptidase_M16"/>
    <property type="match status" value="1"/>
</dbReference>
<dbReference type="Pfam" id="PF05193">
    <property type="entry name" value="Peptidase_M16_C"/>
    <property type="match status" value="1"/>
</dbReference>
<dbReference type="Pfam" id="PF22516">
    <property type="entry name" value="PreP_C"/>
    <property type="match status" value="1"/>
</dbReference>
<dbReference type="SMART" id="SM01264">
    <property type="entry name" value="M16C_associated"/>
    <property type="match status" value="1"/>
</dbReference>
<dbReference type="SUPFAM" id="SSF63411">
    <property type="entry name" value="LuxS/MPP-like metallohydrolase"/>
    <property type="match status" value="4"/>
</dbReference>
<feature type="chain" id="PRO_0000454646" description="Falcilysin">
    <location>
        <begin position="1"/>
        <end position="1193"/>
    </location>
</feature>
<feature type="region of interest" description="Disordered" evidence="4">
    <location>
        <begin position="376"/>
        <end position="404"/>
    </location>
</feature>
<feature type="coiled-coil region" evidence="2">
    <location>
        <begin position="583"/>
        <end position="619"/>
    </location>
</feature>
<feature type="compositionally biased region" description="Low complexity" evidence="4">
    <location>
        <begin position="380"/>
        <end position="394"/>
    </location>
</feature>
<feature type="compositionally biased region" description="Polar residues" evidence="4">
    <location>
        <begin position="395"/>
        <end position="404"/>
    </location>
</feature>
<feature type="active site" description="Proton acceptor" evidence="3">
    <location>
        <position position="132"/>
    </location>
</feature>
<feature type="binding site" evidence="7 16 17">
    <location>
        <position position="129"/>
    </location>
    <ligand>
        <name>Zn(2+)</name>
        <dbReference type="ChEBI" id="CHEBI:29105"/>
    </ligand>
</feature>
<feature type="binding site" evidence="7 16 17">
    <location>
        <position position="133"/>
    </location>
    <ligand>
        <name>Zn(2+)</name>
        <dbReference type="ChEBI" id="CHEBI:29105"/>
    </ligand>
</feature>
<feature type="binding site" evidence="7 16 17">
    <location>
        <position position="243"/>
    </location>
    <ligand>
        <name>Zn(2+)</name>
        <dbReference type="ChEBI" id="CHEBI:29105"/>
    </ligand>
</feature>
<feature type="helix" evidence="20">
    <location>
        <begin position="59"/>
        <end position="64"/>
    </location>
</feature>
<feature type="strand" evidence="20">
    <location>
        <begin position="71"/>
        <end position="79"/>
    </location>
</feature>
<feature type="turn" evidence="20">
    <location>
        <begin position="80"/>
        <end position="83"/>
    </location>
</feature>
<feature type="strand" evidence="20">
    <location>
        <begin position="84"/>
        <end position="91"/>
    </location>
</feature>
<feature type="turn" evidence="20">
    <location>
        <begin position="92"/>
        <end position="94"/>
    </location>
</feature>
<feature type="strand" evidence="20">
    <location>
        <begin position="97"/>
        <end position="103"/>
    </location>
</feature>
<feature type="strand" evidence="20">
    <location>
        <begin position="111"/>
        <end position="118"/>
    </location>
</feature>
<feature type="strand" evidence="20">
    <location>
        <begin position="122"/>
        <end position="125"/>
    </location>
</feature>
<feature type="helix" evidence="20">
    <location>
        <begin position="127"/>
        <end position="134"/>
    </location>
</feature>
<feature type="helix" evidence="21">
    <location>
        <begin position="135"/>
        <end position="137"/>
    </location>
</feature>
<feature type="strand" evidence="22">
    <location>
        <begin position="139"/>
        <end position="142"/>
    </location>
</feature>
<feature type="helix" evidence="20">
    <location>
        <begin position="147"/>
        <end position="153"/>
    </location>
</feature>
<feature type="strand" evidence="20">
    <location>
        <begin position="157"/>
        <end position="164"/>
    </location>
</feature>
<feature type="strand" evidence="20">
    <location>
        <begin position="166"/>
        <end position="177"/>
    </location>
</feature>
<feature type="helix" evidence="20">
    <location>
        <begin position="178"/>
        <end position="193"/>
    </location>
</feature>
<feature type="helix" evidence="20">
    <location>
        <begin position="196"/>
        <end position="198"/>
    </location>
</feature>
<feature type="helix" evidence="20">
    <location>
        <begin position="201"/>
        <end position="207"/>
    </location>
</feature>
<feature type="strand" evidence="20">
    <location>
        <begin position="210"/>
        <end position="215"/>
    </location>
</feature>
<feature type="turn" evidence="20">
    <location>
        <begin position="218"/>
        <end position="222"/>
    </location>
</feature>
<feature type="strand" evidence="27">
    <location>
        <begin position="224"/>
        <end position="226"/>
    </location>
</feature>
<feature type="strand" evidence="20">
    <location>
        <begin position="232"/>
        <end position="237"/>
    </location>
</feature>
<feature type="helix" evidence="20">
    <location>
        <begin position="239"/>
        <end position="247"/>
    </location>
</feature>
<feature type="helix" evidence="20">
    <location>
        <begin position="251"/>
        <end position="263"/>
    </location>
</feature>
<feature type="helix" evidence="20">
    <location>
        <begin position="268"/>
        <end position="270"/>
    </location>
</feature>
<feature type="helix" evidence="20">
    <location>
        <begin position="277"/>
        <end position="280"/>
    </location>
</feature>
<feature type="helix" evidence="20">
    <location>
        <begin position="285"/>
        <end position="295"/>
    </location>
</feature>
<feature type="turn" evidence="20">
    <location>
        <begin position="298"/>
        <end position="300"/>
    </location>
</feature>
<feature type="strand" evidence="20">
    <location>
        <begin position="302"/>
        <end position="309"/>
    </location>
</feature>
<feature type="helix" evidence="20">
    <location>
        <begin position="312"/>
        <end position="322"/>
    </location>
</feature>
<feature type="helix" evidence="20">
    <location>
        <begin position="327"/>
        <end position="329"/>
    </location>
</feature>
<feature type="strand" evidence="20">
    <location>
        <begin position="348"/>
        <end position="355"/>
    </location>
</feature>
<feature type="strand" evidence="24">
    <location>
        <begin position="358"/>
        <end position="360"/>
    </location>
</feature>
<feature type="strand" evidence="20">
    <location>
        <begin position="363"/>
        <end position="372"/>
    </location>
</feature>
<feature type="turn" evidence="18">
    <location>
        <begin position="403"/>
        <end position="405"/>
    </location>
</feature>
<feature type="helix" evidence="20">
    <location>
        <begin position="410"/>
        <end position="424"/>
    </location>
</feature>
<feature type="helix" evidence="20">
    <location>
        <begin position="430"/>
        <end position="438"/>
    </location>
</feature>
<feature type="strand" evidence="20">
    <location>
        <begin position="442"/>
        <end position="450"/>
    </location>
</feature>
<feature type="strand" evidence="20">
    <location>
        <begin position="452"/>
        <end position="455"/>
    </location>
</feature>
<feature type="strand" evidence="20">
    <location>
        <begin position="457"/>
        <end position="465"/>
    </location>
</feature>
<feature type="helix" evidence="20">
    <location>
        <begin position="475"/>
        <end position="477"/>
    </location>
</feature>
<feature type="helix" evidence="20">
    <location>
        <begin position="478"/>
        <end position="496"/>
    </location>
</feature>
<feature type="helix" evidence="20">
    <location>
        <begin position="500"/>
        <end position="517"/>
    </location>
</feature>
<feature type="strand" evidence="19">
    <location>
        <begin position="520"/>
        <end position="522"/>
    </location>
</feature>
<feature type="helix" evidence="20">
    <location>
        <begin position="523"/>
        <end position="536"/>
    </location>
</feature>
<feature type="turn" evidence="20">
    <location>
        <begin position="541"/>
        <end position="545"/>
    </location>
</feature>
<feature type="helix" evidence="20">
    <location>
        <begin position="547"/>
        <end position="560"/>
    </location>
</feature>
<feature type="helix" evidence="20">
    <location>
        <begin position="564"/>
        <end position="572"/>
    </location>
</feature>
<feature type="turn" evidence="20">
    <location>
        <begin position="573"/>
        <end position="575"/>
    </location>
</feature>
<feature type="strand" evidence="20">
    <location>
        <begin position="579"/>
        <end position="589"/>
    </location>
</feature>
<feature type="helix" evidence="20">
    <location>
        <begin position="590"/>
        <end position="608"/>
    </location>
</feature>
<feature type="helix" evidence="20">
    <location>
        <begin position="611"/>
        <end position="629"/>
    </location>
</feature>
<feature type="helix" evidence="20">
    <location>
        <begin position="634"/>
        <end position="637"/>
    </location>
</feature>
<feature type="helix" evidence="20">
    <location>
        <begin position="645"/>
        <end position="647"/>
    </location>
</feature>
<feature type="strand" evidence="20">
    <location>
        <begin position="658"/>
        <end position="662"/>
    </location>
</feature>
<feature type="turn" evidence="20">
    <location>
        <begin position="664"/>
        <end position="666"/>
    </location>
</feature>
<feature type="helix" evidence="20">
    <location>
        <begin position="670"/>
        <end position="678"/>
    </location>
</feature>
<feature type="helix" evidence="20">
    <location>
        <begin position="681"/>
        <end position="695"/>
    </location>
</feature>
<feature type="helix" evidence="25">
    <location>
        <begin position="717"/>
        <end position="721"/>
    </location>
</feature>
<feature type="turn" evidence="20">
    <location>
        <begin position="722"/>
        <end position="725"/>
    </location>
</feature>
<feature type="strand" evidence="20">
    <location>
        <begin position="727"/>
        <end position="733"/>
    </location>
</feature>
<feature type="strand" evidence="20">
    <location>
        <begin position="739"/>
        <end position="747"/>
    </location>
</feature>
<feature type="strand" evidence="27">
    <location>
        <begin position="749"/>
        <end position="751"/>
    </location>
</feature>
<feature type="helix" evidence="20">
    <location>
        <begin position="753"/>
        <end position="756"/>
    </location>
</feature>
<feature type="helix" evidence="20">
    <location>
        <begin position="759"/>
        <end position="765"/>
    </location>
</feature>
<feature type="turn" evidence="20">
    <location>
        <begin position="766"/>
        <end position="768"/>
    </location>
</feature>
<feature type="strand" evidence="20">
    <location>
        <begin position="771"/>
        <end position="774"/>
    </location>
</feature>
<feature type="helix" evidence="20">
    <location>
        <begin position="776"/>
        <end position="786"/>
    </location>
</feature>
<feature type="strand" evidence="20">
    <location>
        <begin position="788"/>
        <end position="797"/>
    </location>
</feature>
<feature type="strand" evidence="26">
    <location>
        <begin position="802"/>
        <end position="804"/>
    </location>
</feature>
<feature type="strand" evidence="20">
    <location>
        <begin position="812"/>
        <end position="822"/>
    </location>
</feature>
<feature type="helix" evidence="20">
    <location>
        <begin position="823"/>
        <end position="825"/>
    </location>
</feature>
<feature type="helix" evidence="20">
    <location>
        <begin position="826"/>
        <end position="838"/>
    </location>
</feature>
<feature type="helix" evidence="20">
    <location>
        <begin position="845"/>
        <end position="865"/>
    </location>
</feature>
<feature type="helix" evidence="20">
    <location>
        <begin position="867"/>
        <end position="874"/>
    </location>
</feature>
<feature type="turn" evidence="20">
    <location>
        <begin position="875"/>
        <end position="879"/>
    </location>
</feature>
<feature type="helix" evidence="20">
    <location>
        <begin position="881"/>
        <end position="890"/>
    </location>
</feature>
<feature type="helix" evidence="20">
    <location>
        <begin position="892"/>
        <end position="907"/>
    </location>
</feature>
<feature type="helix" evidence="20">
    <location>
        <begin position="909"/>
        <end position="923"/>
    </location>
</feature>
<feature type="helix" evidence="26">
    <location>
        <begin position="926"/>
        <end position="928"/>
    </location>
</feature>
<feature type="strand" evidence="20">
    <location>
        <begin position="929"/>
        <end position="935"/>
    </location>
</feature>
<feature type="helix" evidence="20">
    <location>
        <begin position="937"/>
        <end position="940"/>
    </location>
</feature>
<feature type="helix" evidence="20">
    <location>
        <begin position="941"/>
        <end position="944"/>
    </location>
</feature>
<feature type="turn" evidence="20">
    <location>
        <begin position="945"/>
        <end position="947"/>
    </location>
</feature>
<feature type="helix" evidence="20">
    <location>
        <begin position="948"/>
        <end position="960"/>
    </location>
</feature>
<feature type="helix" evidence="20">
    <location>
        <begin position="961"/>
        <end position="964"/>
    </location>
</feature>
<feature type="strand" evidence="20">
    <location>
        <begin position="970"/>
        <end position="972"/>
    </location>
</feature>
<feature type="helix" evidence="20">
    <location>
        <begin position="980"/>
        <end position="986"/>
    </location>
</feature>
<feature type="turn" evidence="23">
    <location>
        <begin position="987"/>
        <end position="991"/>
    </location>
</feature>
<feature type="strand" evidence="20">
    <location>
        <begin position="996"/>
        <end position="1001"/>
    </location>
</feature>
<feature type="strand" evidence="20">
    <location>
        <begin position="1005"/>
        <end position="1014"/>
    </location>
</feature>
<feature type="helix" evidence="20">
    <location>
        <begin position="1025"/>
        <end position="1035"/>
    </location>
</feature>
<feature type="helix" evidence="20">
    <location>
        <begin position="1037"/>
        <end position="1042"/>
    </location>
</feature>
<feature type="turn" evidence="20">
    <location>
        <begin position="1043"/>
        <end position="1046"/>
    </location>
</feature>
<feature type="strand" evidence="20">
    <location>
        <begin position="1049"/>
        <end position="1055"/>
    </location>
</feature>
<feature type="strand" evidence="20">
    <location>
        <begin position="1059"/>
        <end position="1069"/>
    </location>
</feature>
<feature type="helix" evidence="20">
    <location>
        <begin position="1072"/>
        <end position="1079"/>
    </location>
</feature>
<feature type="helix" evidence="20">
    <location>
        <begin position="1081"/>
        <end position="1091"/>
    </location>
</feature>
<feature type="helix" evidence="20">
    <location>
        <begin position="1094"/>
        <end position="1108"/>
    </location>
</feature>
<feature type="helix" evidence="20">
    <location>
        <begin position="1115"/>
        <end position="1126"/>
    </location>
</feature>
<feature type="helix" evidence="20">
    <location>
        <begin position="1131"/>
        <end position="1142"/>
    </location>
</feature>
<feature type="helix" evidence="20">
    <location>
        <begin position="1146"/>
        <end position="1158"/>
    </location>
</feature>
<feature type="helix" evidence="20">
    <location>
        <begin position="1160"/>
        <end position="1163"/>
    </location>
</feature>
<feature type="strand" evidence="20">
    <location>
        <begin position="1166"/>
        <end position="1171"/>
    </location>
</feature>
<feature type="helix" evidence="20">
    <location>
        <begin position="1173"/>
        <end position="1182"/>
    </location>
</feature>
<feature type="strand" evidence="20">
    <location>
        <begin position="1188"/>
        <end position="1191"/>
    </location>
</feature>
<evidence type="ECO:0000250" key="1">
    <source>
        <dbReference type="UniProtKB" id="A0A0L7KF24"/>
    </source>
</evidence>
<evidence type="ECO:0000255" key="2"/>
<evidence type="ECO:0000255" key="3">
    <source>
        <dbReference type="PROSITE-ProRule" id="PRU10096"/>
    </source>
</evidence>
<evidence type="ECO:0000256" key="4">
    <source>
        <dbReference type="SAM" id="MobiDB-lite"/>
    </source>
</evidence>
<evidence type="ECO:0000269" key="5">
    <source>
    </source>
</evidence>
<evidence type="ECO:0000269" key="6">
    <source>
    </source>
</evidence>
<evidence type="ECO:0000269" key="7">
    <source ref="6"/>
</evidence>
<evidence type="ECO:0000303" key="8">
    <source>
    </source>
</evidence>
<evidence type="ECO:0000303" key="9">
    <source>
    </source>
</evidence>
<evidence type="ECO:0000305" key="10"/>
<evidence type="ECO:0000312" key="11">
    <source>
        <dbReference type="EMBL" id="AAF06062.1"/>
    </source>
</evidence>
<evidence type="ECO:0000312" key="12">
    <source>
        <dbReference type="EMBL" id="CAD52728.1"/>
    </source>
</evidence>
<evidence type="ECO:0000312" key="13">
    <source>
        <dbReference type="Proteomes" id="UP000001450"/>
    </source>
</evidence>
<evidence type="ECO:0007744" key="14">
    <source>
        <dbReference type="PDB" id="3S5H"/>
    </source>
</evidence>
<evidence type="ECO:0007744" key="15">
    <source>
        <dbReference type="PDB" id="3S5I"/>
    </source>
</evidence>
<evidence type="ECO:0007744" key="16">
    <source>
        <dbReference type="PDB" id="3S5K"/>
    </source>
</evidence>
<evidence type="ECO:0007744" key="17">
    <source>
        <dbReference type="PDB" id="3S5M"/>
    </source>
</evidence>
<evidence type="ECO:0007829" key="18">
    <source>
        <dbReference type="PDB" id="3S5I"/>
    </source>
</evidence>
<evidence type="ECO:0007829" key="19">
    <source>
        <dbReference type="PDB" id="3S5K"/>
    </source>
</evidence>
<evidence type="ECO:0007829" key="20">
    <source>
        <dbReference type="PDB" id="3S5M"/>
    </source>
</evidence>
<evidence type="ECO:0007829" key="21">
    <source>
        <dbReference type="PDB" id="7DIA"/>
    </source>
</evidence>
<evidence type="ECO:0007829" key="22">
    <source>
        <dbReference type="PDB" id="7VPE"/>
    </source>
</evidence>
<evidence type="ECO:0007829" key="23">
    <source>
        <dbReference type="PDB" id="8HO4"/>
    </source>
</evidence>
<evidence type="ECO:0007829" key="24">
    <source>
        <dbReference type="PDB" id="8HO5"/>
    </source>
</evidence>
<evidence type="ECO:0007829" key="25">
    <source>
        <dbReference type="PDB" id="8WXZ"/>
    </source>
</evidence>
<evidence type="ECO:0007829" key="26">
    <source>
        <dbReference type="PDB" id="8WYT"/>
    </source>
</evidence>
<evidence type="ECO:0007829" key="27">
    <source>
        <dbReference type="PDB" id="8WYU"/>
    </source>
</evidence>
<reference evidence="11" key="1">
    <citation type="journal article" date="1999" name="J. Biol. Chem.">
        <title>Identification and characterization of falcilysin, a metallopeptidase involved in hemoglobin catabolism within the malaria parasite Plasmodium falciparum.</title>
        <authorList>
            <person name="Eggleson K.K."/>
            <person name="Duffin K.L."/>
            <person name="Goldberg D.E."/>
        </authorList>
    </citation>
    <scope>NUCLEOTIDE SEQUENCE [GENOMIC DNA]</scope>
    <source>
        <strain evidence="11">3D7</strain>
    </source>
</reference>
<reference evidence="13" key="2">
    <citation type="journal article" date="2002" name="Nature">
        <title>Genome sequence of the human malaria parasite Plasmodium falciparum.</title>
        <authorList>
            <person name="Gardner M.J."/>
            <person name="Hall N."/>
            <person name="Fung E."/>
            <person name="White O."/>
            <person name="Berriman M."/>
            <person name="Hyman R.W."/>
            <person name="Carlton J.M."/>
            <person name="Pain A."/>
            <person name="Nelson K.E."/>
            <person name="Bowman S."/>
            <person name="Paulsen I.T."/>
            <person name="James K.D."/>
            <person name="Eisen J.A."/>
            <person name="Rutherford K.M."/>
            <person name="Salzberg S.L."/>
            <person name="Craig A."/>
            <person name="Kyes S."/>
            <person name="Chan M.-S."/>
            <person name="Nene V."/>
            <person name="Shallom S.J."/>
            <person name="Suh B."/>
            <person name="Peterson J."/>
            <person name="Angiuoli S."/>
            <person name="Pertea M."/>
            <person name="Allen J."/>
            <person name="Selengut J."/>
            <person name="Haft D."/>
            <person name="Mather M.W."/>
            <person name="Vaidya A.B."/>
            <person name="Martin D.M.A."/>
            <person name="Fairlamb A.H."/>
            <person name="Fraunholz M.J."/>
            <person name="Roos D.S."/>
            <person name="Ralph S.A."/>
            <person name="McFadden G.I."/>
            <person name="Cummings L.M."/>
            <person name="Subramanian G.M."/>
            <person name="Mungall C."/>
            <person name="Venter J.C."/>
            <person name="Carucci D.J."/>
            <person name="Hoffman S.L."/>
            <person name="Newbold C."/>
            <person name="Davis R.W."/>
            <person name="Fraser C.M."/>
            <person name="Barrell B.G."/>
        </authorList>
    </citation>
    <scope>NUCLEOTIDE SEQUENCE [LARGE SCALE GENOMIC DNA]</scope>
    <source>
        <strain evidence="13">3D7</strain>
    </source>
</reference>
<reference evidence="13" key="3">
    <citation type="journal article" date="2002" name="Nature">
        <title>Sequence of Plasmodium falciparum chromosomes 1, 3-9 and 13.</title>
        <authorList>
            <person name="Hall N."/>
            <person name="Pain A."/>
            <person name="Berriman M."/>
            <person name="Churcher C.M."/>
            <person name="Harris B."/>
            <person name="Harris D."/>
            <person name="Mungall K.L."/>
            <person name="Bowman S."/>
            <person name="Atkin R."/>
            <person name="Baker S."/>
            <person name="Barron A."/>
            <person name="Brooks K."/>
            <person name="Buckee C.O."/>
            <person name="Burrows C."/>
            <person name="Cherevach I."/>
            <person name="Chillingworth C."/>
            <person name="Chillingworth T."/>
            <person name="Christodoulou Z."/>
            <person name="Clark L."/>
            <person name="Clark R."/>
            <person name="Corton C."/>
            <person name="Cronin A."/>
            <person name="Davies R.M."/>
            <person name="Davis P."/>
            <person name="Dear P."/>
            <person name="Dearden F."/>
            <person name="Doggett J."/>
            <person name="Feltwell T."/>
            <person name="Goble A."/>
            <person name="Goodhead I."/>
            <person name="Gwilliam R."/>
            <person name="Hamlin N."/>
            <person name="Hance Z."/>
            <person name="Harper D."/>
            <person name="Hauser H."/>
            <person name="Hornsby T."/>
            <person name="Holroyd S."/>
            <person name="Horrocks P."/>
            <person name="Humphray S."/>
            <person name="Jagels K."/>
            <person name="James K.D."/>
            <person name="Johnson D."/>
            <person name="Kerhornou A."/>
            <person name="Knights A."/>
            <person name="Konfortov B."/>
            <person name="Kyes S."/>
            <person name="Larke N."/>
            <person name="Lawson D."/>
            <person name="Lennard N."/>
            <person name="Line A."/>
            <person name="Maddison M."/>
            <person name="Mclean J."/>
            <person name="Mooney P."/>
            <person name="Moule S."/>
            <person name="Murphy L."/>
            <person name="Oliver K."/>
            <person name="Ormond D."/>
            <person name="Price C."/>
            <person name="Quail M.A."/>
            <person name="Rabbinowitsch E."/>
            <person name="Rajandream M.A."/>
            <person name="Rutter S."/>
            <person name="Rutherford K.M."/>
            <person name="Sanders M."/>
            <person name="Simmonds M."/>
            <person name="Seeger K."/>
            <person name="Sharp S."/>
            <person name="Smith R."/>
            <person name="Squares R."/>
            <person name="Squares S."/>
            <person name="Stevens K."/>
            <person name="Taylor K."/>
            <person name="Tivey A."/>
            <person name="Unwin L."/>
            <person name="Whitehead S."/>
            <person name="Woodward J.R."/>
            <person name="Sulston J.E."/>
            <person name="Craig A."/>
            <person name="Newbold C."/>
            <person name="Barrell B.G."/>
        </authorList>
    </citation>
    <scope>NUCLEOTIDE SEQUENCE [LARGE SCALE GENOMIC DNA]</scope>
    <source>
        <strain evidence="13">3D7</strain>
    </source>
</reference>
<reference evidence="10" key="4">
    <citation type="journal article" date="2007" name="Mol. Microbiol.">
        <title>A role for falcilysin in transit peptide degradation in the Plasmodium falciparum apicoplast.</title>
        <authorList>
            <person name="Ponpuak M."/>
            <person name="Klemba M."/>
            <person name="Park M."/>
            <person name="Gluzman I.Y."/>
            <person name="Lamppa G.K."/>
            <person name="Goldberg D.E."/>
        </authorList>
    </citation>
    <scope>FUNCTION</scope>
    <scope>CATALYTIC ACTIVITY</scope>
    <scope>SUBCELLULAR LOCATION</scope>
    <scope>DEVELOPMENTAL STAGE</scope>
</reference>
<reference key="5">
    <citation type="journal article" date="2013" name="Proc. Natl. Acad. Sci. U.S.A.">
        <title>Protein complex directs hemoglobin-to-hemozoin formation in Plasmodium falciparum.</title>
        <authorList>
            <person name="Chugh M."/>
            <person name="Sundararaman V."/>
            <person name="Kumar S."/>
            <person name="Reddy V.S."/>
            <person name="Siddiqui W.A."/>
            <person name="Stuart K.D."/>
            <person name="Malhotra P."/>
        </authorList>
    </citation>
    <scope>IDENTIFICATION IN THE HEMOZOIN FORMATION COMPLEX</scope>
    <scope>SUBCELLULAR LOCATION</scope>
    <scope>DEVELOPMENTAL STAGE</scope>
    <scope>IDENTIFICATION BY MASS SPECTROMETRY</scope>
</reference>
<reference evidence="14 15 16 17" key="6">
    <citation type="submission" date="2011-05" db="PDB data bank">
        <title>Crystal structures of falcilysin, a M16 metalloprotease from the malaria parasite Plasmodium falciparum.</title>
        <authorList>
            <person name="Morgunova E."/>
            <person name="Ponpuak M."/>
            <person name="Istvan E."/>
            <person name="Popov A."/>
            <person name="Goldberg D."/>
            <person name="Eneqvist T."/>
        </authorList>
    </citation>
    <scope>X-RAY CRYSTALLOGRAPHY (1.55 ANGSTROMS) IN COMPLEX WITH ZINC</scope>
</reference>
<proteinExistence type="evidence at protein level"/>